<sequence>MDLQTKLEQLFQQNNDTIKKVKSLDELNQIRVQLLGKKGPITGVLRGMKDLSAEERPKVGAFANKIRDDLSAVIEARKAQLEQAVINAKLASETVDVTLPGDPVEAGTPHIITQIMDDLEGFFMGMGYQVLTGPEVEEDHYNFEMMNIPKDHPARDMQETFYITNELLMRSQTSPMQARTMEKHDFTKGPLKMISPGVVYRRDDDDATHSHQFHQMEGLVIDKHITMADLKGTLLAMCQHVFGKDRTIRLRPSYFPFTEPSVEVDVSCFRCGGKGCPVCKYTGWIEVLGAGMVHPNVLRAANIDADVYGGFAFGLGPDRFAMLKYGIDDIRSFYTDDLRFLTQFSQEG</sequence>
<gene>
    <name evidence="1" type="primary">pheS</name>
    <name type="ordered locus">LSEI_1672</name>
</gene>
<keyword id="KW-0030">Aminoacyl-tRNA synthetase</keyword>
<keyword id="KW-0067">ATP-binding</keyword>
<keyword id="KW-0963">Cytoplasm</keyword>
<keyword id="KW-0436">Ligase</keyword>
<keyword id="KW-0460">Magnesium</keyword>
<keyword id="KW-0479">Metal-binding</keyword>
<keyword id="KW-0547">Nucleotide-binding</keyword>
<keyword id="KW-0648">Protein biosynthesis</keyword>
<keyword id="KW-1185">Reference proteome</keyword>
<name>SYFA_LACP3</name>
<proteinExistence type="inferred from homology"/>
<protein>
    <recommendedName>
        <fullName evidence="1">Phenylalanine--tRNA ligase alpha subunit</fullName>
        <ecNumber evidence="1">6.1.1.20</ecNumber>
    </recommendedName>
    <alternativeName>
        <fullName evidence="1">Phenylalanyl-tRNA synthetase alpha subunit</fullName>
        <shortName evidence="1">PheRS</shortName>
    </alternativeName>
</protein>
<accession>Q038C7</accession>
<evidence type="ECO:0000255" key="1">
    <source>
        <dbReference type="HAMAP-Rule" id="MF_00281"/>
    </source>
</evidence>
<dbReference type="EC" id="6.1.1.20" evidence="1"/>
<dbReference type="EMBL" id="CP000423">
    <property type="protein sequence ID" value="ABJ70445.1"/>
    <property type="molecule type" value="Genomic_DNA"/>
</dbReference>
<dbReference type="RefSeq" id="WP_003564587.1">
    <property type="nucleotide sequence ID" value="NC_008526.1"/>
</dbReference>
<dbReference type="RefSeq" id="YP_806887.1">
    <property type="nucleotide sequence ID" value="NC_008526.1"/>
</dbReference>
<dbReference type="SMR" id="Q038C7"/>
<dbReference type="STRING" id="321967.LSEI_1672"/>
<dbReference type="PaxDb" id="321967-LSEI_1672"/>
<dbReference type="GeneID" id="57090375"/>
<dbReference type="KEGG" id="lca:LSEI_1672"/>
<dbReference type="PATRIC" id="fig|321967.11.peg.1653"/>
<dbReference type="HOGENOM" id="CLU_025086_0_1_9"/>
<dbReference type="Proteomes" id="UP000001651">
    <property type="component" value="Chromosome"/>
</dbReference>
<dbReference type="GO" id="GO:0005737">
    <property type="term" value="C:cytoplasm"/>
    <property type="evidence" value="ECO:0007669"/>
    <property type="project" value="UniProtKB-SubCell"/>
</dbReference>
<dbReference type="GO" id="GO:0005524">
    <property type="term" value="F:ATP binding"/>
    <property type="evidence" value="ECO:0007669"/>
    <property type="project" value="UniProtKB-UniRule"/>
</dbReference>
<dbReference type="GO" id="GO:0140096">
    <property type="term" value="F:catalytic activity, acting on a protein"/>
    <property type="evidence" value="ECO:0007669"/>
    <property type="project" value="UniProtKB-ARBA"/>
</dbReference>
<dbReference type="GO" id="GO:0000287">
    <property type="term" value="F:magnesium ion binding"/>
    <property type="evidence" value="ECO:0007669"/>
    <property type="project" value="UniProtKB-UniRule"/>
</dbReference>
<dbReference type="GO" id="GO:0004826">
    <property type="term" value="F:phenylalanine-tRNA ligase activity"/>
    <property type="evidence" value="ECO:0007669"/>
    <property type="project" value="UniProtKB-UniRule"/>
</dbReference>
<dbReference type="GO" id="GO:0016740">
    <property type="term" value="F:transferase activity"/>
    <property type="evidence" value="ECO:0007669"/>
    <property type="project" value="UniProtKB-ARBA"/>
</dbReference>
<dbReference type="GO" id="GO:0000049">
    <property type="term" value="F:tRNA binding"/>
    <property type="evidence" value="ECO:0007669"/>
    <property type="project" value="InterPro"/>
</dbReference>
<dbReference type="GO" id="GO:0006432">
    <property type="term" value="P:phenylalanyl-tRNA aminoacylation"/>
    <property type="evidence" value="ECO:0007669"/>
    <property type="project" value="UniProtKB-UniRule"/>
</dbReference>
<dbReference type="CDD" id="cd00496">
    <property type="entry name" value="PheRS_alpha_core"/>
    <property type="match status" value="1"/>
</dbReference>
<dbReference type="FunFam" id="3.30.930.10:FF:000003">
    <property type="entry name" value="Phenylalanine--tRNA ligase alpha subunit"/>
    <property type="match status" value="1"/>
</dbReference>
<dbReference type="Gene3D" id="3.30.930.10">
    <property type="entry name" value="Bira Bifunctional Protein, Domain 2"/>
    <property type="match status" value="1"/>
</dbReference>
<dbReference type="HAMAP" id="MF_00281">
    <property type="entry name" value="Phe_tRNA_synth_alpha1"/>
    <property type="match status" value="1"/>
</dbReference>
<dbReference type="InterPro" id="IPR006195">
    <property type="entry name" value="aa-tRNA-synth_II"/>
</dbReference>
<dbReference type="InterPro" id="IPR045864">
    <property type="entry name" value="aa-tRNA-synth_II/BPL/LPL"/>
</dbReference>
<dbReference type="InterPro" id="IPR004529">
    <property type="entry name" value="Phe-tRNA-synth_IIc_asu"/>
</dbReference>
<dbReference type="InterPro" id="IPR004188">
    <property type="entry name" value="Phe-tRNA_ligase_II_N"/>
</dbReference>
<dbReference type="InterPro" id="IPR022911">
    <property type="entry name" value="Phe_tRNA_ligase_alpha1_bac"/>
</dbReference>
<dbReference type="InterPro" id="IPR002319">
    <property type="entry name" value="Phenylalanyl-tRNA_Synthase"/>
</dbReference>
<dbReference type="InterPro" id="IPR010978">
    <property type="entry name" value="tRNA-bd_arm"/>
</dbReference>
<dbReference type="NCBIfam" id="TIGR00468">
    <property type="entry name" value="pheS"/>
    <property type="match status" value="1"/>
</dbReference>
<dbReference type="PANTHER" id="PTHR11538:SF41">
    <property type="entry name" value="PHENYLALANINE--TRNA LIGASE, MITOCHONDRIAL"/>
    <property type="match status" value="1"/>
</dbReference>
<dbReference type="PANTHER" id="PTHR11538">
    <property type="entry name" value="PHENYLALANYL-TRNA SYNTHETASE"/>
    <property type="match status" value="1"/>
</dbReference>
<dbReference type="Pfam" id="PF02912">
    <property type="entry name" value="Phe_tRNA-synt_N"/>
    <property type="match status" value="1"/>
</dbReference>
<dbReference type="Pfam" id="PF01409">
    <property type="entry name" value="tRNA-synt_2d"/>
    <property type="match status" value="1"/>
</dbReference>
<dbReference type="SUPFAM" id="SSF55681">
    <property type="entry name" value="Class II aaRS and biotin synthetases"/>
    <property type="match status" value="1"/>
</dbReference>
<dbReference type="SUPFAM" id="SSF46589">
    <property type="entry name" value="tRNA-binding arm"/>
    <property type="match status" value="1"/>
</dbReference>
<dbReference type="PROSITE" id="PS50862">
    <property type="entry name" value="AA_TRNA_LIGASE_II"/>
    <property type="match status" value="1"/>
</dbReference>
<comment type="catalytic activity">
    <reaction evidence="1">
        <text>tRNA(Phe) + L-phenylalanine + ATP = L-phenylalanyl-tRNA(Phe) + AMP + diphosphate + H(+)</text>
        <dbReference type="Rhea" id="RHEA:19413"/>
        <dbReference type="Rhea" id="RHEA-COMP:9668"/>
        <dbReference type="Rhea" id="RHEA-COMP:9699"/>
        <dbReference type="ChEBI" id="CHEBI:15378"/>
        <dbReference type="ChEBI" id="CHEBI:30616"/>
        <dbReference type="ChEBI" id="CHEBI:33019"/>
        <dbReference type="ChEBI" id="CHEBI:58095"/>
        <dbReference type="ChEBI" id="CHEBI:78442"/>
        <dbReference type="ChEBI" id="CHEBI:78531"/>
        <dbReference type="ChEBI" id="CHEBI:456215"/>
        <dbReference type="EC" id="6.1.1.20"/>
    </reaction>
</comment>
<comment type="cofactor">
    <cofactor evidence="1">
        <name>Mg(2+)</name>
        <dbReference type="ChEBI" id="CHEBI:18420"/>
    </cofactor>
    <text evidence="1">Binds 2 magnesium ions per tetramer.</text>
</comment>
<comment type="subunit">
    <text evidence="1">Tetramer of two alpha and two beta subunits.</text>
</comment>
<comment type="subcellular location">
    <subcellularLocation>
        <location evidence="1">Cytoplasm</location>
    </subcellularLocation>
</comment>
<comment type="similarity">
    <text evidence="1">Belongs to the class-II aminoacyl-tRNA synthetase family. Phe-tRNA synthetase alpha subunit type 1 subfamily.</text>
</comment>
<feature type="chain" id="PRO_1000006847" description="Phenylalanine--tRNA ligase alpha subunit">
    <location>
        <begin position="1"/>
        <end position="348"/>
    </location>
</feature>
<feature type="binding site" evidence="1">
    <location>
        <position position="259"/>
    </location>
    <ligand>
        <name>Mg(2+)</name>
        <dbReference type="ChEBI" id="CHEBI:18420"/>
        <note>shared with beta subunit</note>
    </ligand>
</feature>
<organism>
    <name type="scientific">Lacticaseibacillus paracasei (strain ATCC 334 / BCRC 17002 / CCUG 31169 / CIP 107868 / KCTC 3260 / NRRL B-441)</name>
    <name type="common">Lactobacillus paracasei</name>
    <dbReference type="NCBI Taxonomy" id="321967"/>
    <lineage>
        <taxon>Bacteria</taxon>
        <taxon>Bacillati</taxon>
        <taxon>Bacillota</taxon>
        <taxon>Bacilli</taxon>
        <taxon>Lactobacillales</taxon>
        <taxon>Lactobacillaceae</taxon>
        <taxon>Lacticaseibacillus</taxon>
    </lineage>
</organism>
<reference key="1">
    <citation type="journal article" date="2006" name="Proc. Natl. Acad. Sci. U.S.A.">
        <title>Comparative genomics of the lactic acid bacteria.</title>
        <authorList>
            <person name="Makarova K.S."/>
            <person name="Slesarev A."/>
            <person name="Wolf Y.I."/>
            <person name="Sorokin A."/>
            <person name="Mirkin B."/>
            <person name="Koonin E.V."/>
            <person name="Pavlov A."/>
            <person name="Pavlova N."/>
            <person name="Karamychev V."/>
            <person name="Polouchine N."/>
            <person name="Shakhova V."/>
            <person name="Grigoriev I."/>
            <person name="Lou Y."/>
            <person name="Rohksar D."/>
            <person name="Lucas S."/>
            <person name="Huang K."/>
            <person name="Goodstein D.M."/>
            <person name="Hawkins T."/>
            <person name="Plengvidhya V."/>
            <person name="Welker D."/>
            <person name="Hughes J."/>
            <person name="Goh Y."/>
            <person name="Benson A."/>
            <person name="Baldwin K."/>
            <person name="Lee J.-H."/>
            <person name="Diaz-Muniz I."/>
            <person name="Dosti B."/>
            <person name="Smeianov V."/>
            <person name="Wechter W."/>
            <person name="Barabote R."/>
            <person name="Lorca G."/>
            <person name="Altermann E."/>
            <person name="Barrangou R."/>
            <person name="Ganesan B."/>
            <person name="Xie Y."/>
            <person name="Rawsthorne H."/>
            <person name="Tamir D."/>
            <person name="Parker C."/>
            <person name="Breidt F."/>
            <person name="Broadbent J.R."/>
            <person name="Hutkins R."/>
            <person name="O'Sullivan D."/>
            <person name="Steele J."/>
            <person name="Unlu G."/>
            <person name="Saier M.H. Jr."/>
            <person name="Klaenhammer T."/>
            <person name="Richardson P."/>
            <person name="Kozyavkin S."/>
            <person name="Weimer B.C."/>
            <person name="Mills D.A."/>
        </authorList>
    </citation>
    <scope>NUCLEOTIDE SEQUENCE [LARGE SCALE GENOMIC DNA]</scope>
    <source>
        <strain>ATCC 334 / BCRC 17002 / CCUG 31169 / CIP 107868 / KCTC 3260 / NRRL B-441</strain>
    </source>
</reference>